<sequence>MAIVYLSLGSNLGDRHSLLSAALEMLQTRVGRLLTLSRFYETEPWGFESPHPFLNAVVALRSELKPQDILHITQAIERELGRTQKSNGGVYHDRPIDIDILLHSVYPKVQSPELELPHPQMWQRDFVRMPLSDVAPWLHPEAPTPNL</sequence>
<proteinExistence type="inferred from homology"/>
<name>HPPK_PORG3</name>
<organism>
    <name type="scientific">Porphyromonas gingivalis (strain ATCC 33277 / DSM 20709 / CIP 103683 / JCM 12257 / NCTC 11834 / 2561)</name>
    <dbReference type="NCBI Taxonomy" id="431947"/>
    <lineage>
        <taxon>Bacteria</taxon>
        <taxon>Pseudomonadati</taxon>
        <taxon>Bacteroidota</taxon>
        <taxon>Bacteroidia</taxon>
        <taxon>Bacteroidales</taxon>
        <taxon>Porphyromonadaceae</taxon>
        <taxon>Porphyromonas</taxon>
    </lineage>
</organism>
<protein>
    <recommendedName>
        <fullName evidence="1">2-amino-4-hydroxy-6-hydroxymethyldihydropteridine pyrophosphokinase</fullName>
        <ecNumber evidence="1">2.7.6.3</ecNumber>
    </recommendedName>
    <alternativeName>
        <fullName evidence="1">6-hydroxymethyl-7,8-dihydropterin pyrophosphokinase</fullName>
        <shortName evidence="1">PPPK</shortName>
    </alternativeName>
    <alternativeName>
        <fullName evidence="1">7,8-dihydro-6-hydroxymethylpterin-pyrophosphokinase</fullName>
        <shortName evidence="1">HPPK</shortName>
    </alternativeName>
</protein>
<feature type="chain" id="PRO_0000370696" description="2-amino-4-hydroxy-6-hydroxymethyldihydropteridine pyrophosphokinase">
    <location>
        <begin position="1"/>
        <end position="147"/>
    </location>
</feature>
<gene>
    <name type="primary">folK</name>
    <name type="ordered locus">PGN_0568</name>
</gene>
<evidence type="ECO:0000250" key="1">
    <source>
        <dbReference type="UniProtKB" id="P26281"/>
    </source>
</evidence>
<evidence type="ECO:0000305" key="2"/>
<dbReference type="EC" id="2.7.6.3" evidence="1"/>
<dbReference type="EMBL" id="AB016286">
    <property type="protein sequence ID" value="BAA31956.1"/>
    <property type="molecule type" value="Genomic_DNA"/>
</dbReference>
<dbReference type="EMBL" id="AP009380">
    <property type="protein sequence ID" value="BAG33087.1"/>
    <property type="status" value="ALT_INIT"/>
    <property type="molecule type" value="Genomic_DNA"/>
</dbReference>
<dbReference type="RefSeq" id="WP_004585365.1">
    <property type="nucleotide sequence ID" value="NZ_CP025930.1"/>
</dbReference>
<dbReference type="SMR" id="B2RI92"/>
<dbReference type="GeneID" id="29255793"/>
<dbReference type="KEGG" id="pgn:PGN_0568"/>
<dbReference type="eggNOG" id="COG0801">
    <property type="taxonomic scope" value="Bacteria"/>
</dbReference>
<dbReference type="HOGENOM" id="CLU_097916_0_0_10"/>
<dbReference type="OrthoDB" id="9808041at2"/>
<dbReference type="BioCyc" id="PGIN431947:G1G2V-610-MONOMER"/>
<dbReference type="UniPathway" id="UPA00077">
    <property type="reaction ID" value="UER00155"/>
</dbReference>
<dbReference type="Proteomes" id="UP000008842">
    <property type="component" value="Chromosome"/>
</dbReference>
<dbReference type="GO" id="GO:0003848">
    <property type="term" value="F:2-amino-4-hydroxy-6-hydroxymethyldihydropteridine diphosphokinase activity"/>
    <property type="evidence" value="ECO:0007669"/>
    <property type="project" value="UniProtKB-EC"/>
</dbReference>
<dbReference type="GO" id="GO:0005524">
    <property type="term" value="F:ATP binding"/>
    <property type="evidence" value="ECO:0007669"/>
    <property type="project" value="UniProtKB-KW"/>
</dbReference>
<dbReference type="GO" id="GO:0016301">
    <property type="term" value="F:kinase activity"/>
    <property type="evidence" value="ECO:0007669"/>
    <property type="project" value="UniProtKB-KW"/>
</dbReference>
<dbReference type="GO" id="GO:0046656">
    <property type="term" value="P:folic acid biosynthetic process"/>
    <property type="evidence" value="ECO:0007669"/>
    <property type="project" value="UniProtKB-KW"/>
</dbReference>
<dbReference type="GO" id="GO:0046654">
    <property type="term" value="P:tetrahydrofolate biosynthetic process"/>
    <property type="evidence" value="ECO:0007669"/>
    <property type="project" value="UniProtKB-UniPathway"/>
</dbReference>
<dbReference type="CDD" id="cd00483">
    <property type="entry name" value="HPPK"/>
    <property type="match status" value="1"/>
</dbReference>
<dbReference type="Gene3D" id="3.30.70.560">
    <property type="entry name" value="7,8-Dihydro-6-hydroxymethylpterin-pyrophosphokinase HPPK"/>
    <property type="match status" value="1"/>
</dbReference>
<dbReference type="InterPro" id="IPR000550">
    <property type="entry name" value="Hppk"/>
</dbReference>
<dbReference type="InterPro" id="IPR035907">
    <property type="entry name" value="Hppk_sf"/>
</dbReference>
<dbReference type="NCBIfam" id="TIGR01498">
    <property type="entry name" value="folK"/>
    <property type="match status" value="1"/>
</dbReference>
<dbReference type="PANTHER" id="PTHR43071">
    <property type="entry name" value="2-AMINO-4-HYDROXY-6-HYDROXYMETHYLDIHYDROPTERIDINE PYROPHOSPHOKINASE"/>
    <property type="match status" value="1"/>
</dbReference>
<dbReference type="PANTHER" id="PTHR43071:SF1">
    <property type="entry name" value="2-AMINO-4-HYDROXY-6-HYDROXYMETHYLDIHYDROPTERIDINE PYROPHOSPHOKINASE"/>
    <property type="match status" value="1"/>
</dbReference>
<dbReference type="Pfam" id="PF01288">
    <property type="entry name" value="HPPK"/>
    <property type="match status" value="1"/>
</dbReference>
<dbReference type="SUPFAM" id="SSF55083">
    <property type="entry name" value="6-hydroxymethyl-7,8-dihydropterin pyrophosphokinase, HPPK"/>
    <property type="match status" value="1"/>
</dbReference>
<keyword id="KW-0067">ATP-binding</keyword>
<keyword id="KW-0289">Folate biosynthesis</keyword>
<keyword id="KW-0418">Kinase</keyword>
<keyword id="KW-0547">Nucleotide-binding</keyword>
<keyword id="KW-0808">Transferase</keyword>
<comment type="function">
    <text evidence="1">Catalyzes the transfer of pyrophosphate from adenosine triphosphate (ATP) to 6-hydroxymethyl-7,8-dihydropterin, an enzymatic step in folate biosynthesis pathway.</text>
</comment>
<comment type="catalytic activity">
    <reaction evidence="1">
        <text>6-hydroxymethyl-7,8-dihydropterin + ATP = (7,8-dihydropterin-6-yl)methyl diphosphate + AMP + H(+)</text>
        <dbReference type="Rhea" id="RHEA:11412"/>
        <dbReference type="ChEBI" id="CHEBI:15378"/>
        <dbReference type="ChEBI" id="CHEBI:30616"/>
        <dbReference type="ChEBI" id="CHEBI:44841"/>
        <dbReference type="ChEBI" id="CHEBI:72950"/>
        <dbReference type="ChEBI" id="CHEBI:456215"/>
        <dbReference type="EC" id="2.7.6.3"/>
    </reaction>
</comment>
<comment type="pathway">
    <text evidence="1">Cofactor biosynthesis; tetrahydrofolate biosynthesis; 2-amino-4-hydroxy-6-hydroxymethyl-7,8-dihydropteridine diphosphate from 7,8-dihydroneopterin triphosphate: step 4/4.</text>
</comment>
<comment type="similarity">
    <text evidence="2">Belongs to the HPPK family.</text>
</comment>
<comment type="sequence caution" evidence="2">
    <conflict type="erroneous initiation">
        <sequence resource="EMBL-CDS" id="BAG33087"/>
    </conflict>
</comment>
<reference key="1">
    <citation type="submission" date="1998-07" db="EMBL/GenBank/DDBJ databases">
        <title>A folK homolog of Porphyromonas gingivalis.</title>
        <authorList>
            <person name="Nakayama K."/>
            <person name="Shi Y."/>
        </authorList>
    </citation>
    <scope>NUCLEOTIDE SEQUENCE [GENOMIC DNA]</scope>
</reference>
<reference key="2">
    <citation type="journal article" date="2008" name="DNA Res.">
        <title>Determination of the genome sequence of Porphyromonas gingivalis strain ATCC 33277 and genomic comparison with strain W83 revealed extensive genome rearrangements in P. gingivalis.</title>
        <authorList>
            <person name="Naito M."/>
            <person name="Hirakawa H."/>
            <person name="Yamashita A."/>
            <person name="Ohara N."/>
            <person name="Shoji M."/>
            <person name="Yukitake H."/>
            <person name="Nakayama K."/>
            <person name="Toh H."/>
            <person name="Yoshimura F."/>
            <person name="Kuhara S."/>
            <person name="Hattori M."/>
            <person name="Hayashi T."/>
            <person name="Nakayama K."/>
        </authorList>
    </citation>
    <scope>NUCLEOTIDE SEQUENCE [LARGE SCALE GENOMIC DNA]</scope>
    <source>
        <strain>ATCC 33277 / DSM 20709 / CIP 103683 / JCM 12257 / NCTC 11834 / 2561</strain>
    </source>
</reference>
<accession>B2RI92</accession>
<accession>O83019</accession>